<sequence>MPSVDDVLEQVGEFGWFQKQAFLNLCLTSVAFAPIYVGIVFLGFTPDHRCRSPGVAELSQRCGWSLAEELNYTVPGLGPAGQAFPRQCRRYEVDWNQSTLGCEDPLAGLAANSSHLPLGPCQYGWVYDTPGSSIVTEFNLVCEAAWKVDLFQSCVNVGFFVGSMGIGYIADRLVGSSASWPPPHQCRLGRPDAVAPDYVSLLVFRLLQGLVSKGSWMAGYTLITEFVGLGYRKTVAILYQTAFSVGLVLLSGLAYAVPHWRSLQLAVSLPIFLLLLCYWFVPESPRWLLSQKRNTQAIKIMDRIAQKNGKLPPADLKMLSLEEEVVTERLSPSFLDLFRTQNLRKYTFILMYLWFTSSVLYQGLIMHVGATGGSLYLDFLYSALVEFPAAFVILLIIDRFGRLYLLAGSNLLAGAACFFMIFISHDLHWLSIVAACIGRMGITIVFQMVCLVSAELYPTFIRNLGVMVCSSLCDLGGVVAPFLVFRLTEVWRGLPLVLFAALGLVAGGMSLLLPETKGVALPETIEEVERLGRKAKPRDNMIYLQVKMPEPAGL</sequence>
<gene>
    <name type="primary">SLC22A1</name>
    <name type="synonym">OCT1</name>
</gene>
<keyword id="KW-1003">Cell membrane</keyword>
<keyword id="KW-0325">Glycoprotein</keyword>
<keyword id="KW-0406">Ion transport</keyword>
<keyword id="KW-0472">Membrane</keyword>
<keyword id="KW-0597">Phosphoprotein</keyword>
<keyword id="KW-1185">Reference proteome</keyword>
<keyword id="KW-0812">Transmembrane</keyword>
<keyword id="KW-1133">Transmembrane helix</keyword>
<keyword id="KW-0813">Transport</keyword>
<name>S22A1_PIG</name>
<proteinExistence type="evidence at transcript level"/>
<accession>Q863T6</accession>
<protein>
    <recommendedName>
        <fullName>Solute carrier family 22 member 1</fullName>
    </recommendedName>
    <alternativeName>
        <fullName>Organic cation transporter 1</fullName>
    </alternativeName>
    <alternativeName>
        <fullName>pOCT1</fullName>
    </alternativeName>
</protein>
<reference key="1">
    <citation type="submission" date="2003-02" db="EMBL/GenBank/DDBJ databases">
        <title>Molecular and functional characterization of pig kidney OCT1.</title>
        <authorList>
            <person name="Honscha K.U."/>
            <person name="Aschenbach J.R."/>
            <person name="Gabel G."/>
        </authorList>
    </citation>
    <scope>NUCLEOTIDE SEQUENCE [MRNA]</scope>
    <source>
        <tissue>Kidney</tissue>
    </source>
</reference>
<dbReference type="EMBL" id="AY238476">
    <property type="protein sequence ID" value="AAP13545.1"/>
    <property type="molecule type" value="mRNA"/>
</dbReference>
<dbReference type="SMR" id="Q863T6"/>
<dbReference type="FunCoup" id="Q863T6">
    <property type="interactions" value="106"/>
</dbReference>
<dbReference type="STRING" id="9823.ENSSSCP00000040595"/>
<dbReference type="GlyCosmos" id="Q863T6">
    <property type="glycosylation" value="1 site, No reported glycans"/>
</dbReference>
<dbReference type="GlyGen" id="Q863T6">
    <property type="glycosylation" value="1 site"/>
</dbReference>
<dbReference type="PaxDb" id="9823-ENSSSCP00000004367"/>
<dbReference type="eggNOG" id="KOG0255">
    <property type="taxonomic scope" value="Eukaryota"/>
</dbReference>
<dbReference type="InParanoid" id="Q863T6"/>
<dbReference type="Proteomes" id="UP000008227">
    <property type="component" value="Unplaced"/>
</dbReference>
<dbReference type="Proteomes" id="UP000314985">
    <property type="component" value="Unplaced"/>
</dbReference>
<dbReference type="Proteomes" id="UP000694570">
    <property type="component" value="Unplaced"/>
</dbReference>
<dbReference type="Proteomes" id="UP000694571">
    <property type="component" value="Unplaced"/>
</dbReference>
<dbReference type="Proteomes" id="UP000694720">
    <property type="component" value="Unplaced"/>
</dbReference>
<dbReference type="Proteomes" id="UP000694722">
    <property type="component" value="Unplaced"/>
</dbReference>
<dbReference type="Proteomes" id="UP000694723">
    <property type="component" value="Unplaced"/>
</dbReference>
<dbReference type="Proteomes" id="UP000694724">
    <property type="component" value="Unplaced"/>
</dbReference>
<dbReference type="Proteomes" id="UP000694725">
    <property type="component" value="Unplaced"/>
</dbReference>
<dbReference type="Proteomes" id="UP000694726">
    <property type="component" value="Unplaced"/>
</dbReference>
<dbReference type="Proteomes" id="UP000694727">
    <property type="component" value="Unplaced"/>
</dbReference>
<dbReference type="Proteomes" id="UP000694728">
    <property type="component" value="Unplaced"/>
</dbReference>
<dbReference type="GO" id="GO:0016324">
    <property type="term" value="C:apical plasma membrane"/>
    <property type="evidence" value="ECO:0000250"/>
    <property type="project" value="UniProtKB"/>
</dbReference>
<dbReference type="GO" id="GO:0009925">
    <property type="term" value="C:basal plasma membrane"/>
    <property type="evidence" value="ECO:0000250"/>
    <property type="project" value="UniProtKB"/>
</dbReference>
<dbReference type="GO" id="GO:0016323">
    <property type="term" value="C:basolateral plasma membrane"/>
    <property type="evidence" value="ECO:0000250"/>
    <property type="project" value="UniProtKB"/>
</dbReference>
<dbReference type="GO" id="GO:0016328">
    <property type="term" value="C:lateral plasma membrane"/>
    <property type="evidence" value="ECO:0000250"/>
    <property type="project" value="UniProtKB"/>
</dbReference>
<dbReference type="GO" id="GO:1901235">
    <property type="term" value="F:(R)-carnitine transmembrane transporter activity"/>
    <property type="evidence" value="ECO:0000250"/>
    <property type="project" value="UniProtKB"/>
</dbReference>
<dbReference type="GO" id="GO:0005277">
    <property type="term" value="F:acetylcholine transmembrane transporter activity"/>
    <property type="evidence" value="ECO:0000250"/>
    <property type="project" value="UniProtKB"/>
</dbReference>
<dbReference type="GO" id="GO:0008504">
    <property type="term" value="F:monoamine transmembrane transporter activity"/>
    <property type="evidence" value="ECO:0000250"/>
    <property type="project" value="UniProtKB"/>
</dbReference>
<dbReference type="GO" id="GO:0005326">
    <property type="term" value="F:neurotransmitter transmembrane transporter activity"/>
    <property type="evidence" value="ECO:0000250"/>
    <property type="project" value="UniProtKB"/>
</dbReference>
<dbReference type="GO" id="GO:0008514">
    <property type="term" value="F:organic anion transmembrane transporter activity"/>
    <property type="evidence" value="ECO:0000250"/>
    <property type="project" value="UniProtKB"/>
</dbReference>
<dbReference type="GO" id="GO:0015101">
    <property type="term" value="F:organic cation transmembrane transporter activity"/>
    <property type="evidence" value="ECO:0000250"/>
    <property type="project" value="UniProtKB"/>
</dbReference>
<dbReference type="GO" id="GO:0015132">
    <property type="term" value="F:prostaglandin transmembrane transporter activity"/>
    <property type="evidence" value="ECO:0000250"/>
    <property type="project" value="UniProtKB"/>
</dbReference>
<dbReference type="GO" id="GO:0015489">
    <property type="term" value="F:putrescine transmembrane transporter activity"/>
    <property type="evidence" value="ECO:0000250"/>
    <property type="project" value="UniProtKB"/>
</dbReference>
<dbReference type="GO" id="GO:0015651">
    <property type="term" value="F:quaternary ammonium group transmembrane transporter activity"/>
    <property type="evidence" value="ECO:0000250"/>
    <property type="project" value="UniProtKB"/>
</dbReference>
<dbReference type="GO" id="GO:0015606">
    <property type="term" value="F:spermidine transmembrane transporter activity"/>
    <property type="evidence" value="ECO:0000250"/>
    <property type="project" value="UniProtKB"/>
</dbReference>
<dbReference type="GO" id="GO:0042910">
    <property type="term" value="F:xenobiotic transmembrane transporter activity"/>
    <property type="evidence" value="ECO:0000250"/>
    <property type="project" value="UniProtKB"/>
</dbReference>
<dbReference type="GO" id="GO:1902270">
    <property type="term" value="P:(R)-carnitine transmembrane transport"/>
    <property type="evidence" value="ECO:0000250"/>
    <property type="project" value="UniProtKB"/>
</dbReference>
<dbReference type="GO" id="GO:0015870">
    <property type="term" value="P:acetylcholine transport"/>
    <property type="evidence" value="ECO:0000250"/>
    <property type="project" value="UniProtKB"/>
</dbReference>
<dbReference type="GO" id="GO:0015872">
    <property type="term" value="P:dopamine transport"/>
    <property type="evidence" value="ECO:0000250"/>
    <property type="project" value="UniProtKB"/>
</dbReference>
<dbReference type="GO" id="GO:0015844">
    <property type="term" value="P:monoamine transport"/>
    <property type="evidence" value="ECO:0000250"/>
    <property type="project" value="UniProtKB"/>
</dbReference>
<dbReference type="GO" id="GO:0006811">
    <property type="term" value="P:monoatomic ion transport"/>
    <property type="evidence" value="ECO:0007669"/>
    <property type="project" value="UniProtKB-KW"/>
</dbReference>
<dbReference type="GO" id="GO:0015874">
    <property type="term" value="P:norepinephrine transport"/>
    <property type="evidence" value="ECO:0000250"/>
    <property type="project" value="UniProtKB"/>
</dbReference>
<dbReference type="GO" id="GO:1902616">
    <property type="term" value="P:O-acyl-L-carnitine transmembrane transport"/>
    <property type="evidence" value="ECO:0000250"/>
    <property type="project" value="UniProtKB"/>
</dbReference>
<dbReference type="GO" id="GO:0015695">
    <property type="term" value="P:organic cation transport"/>
    <property type="evidence" value="ECO:0000318"/>
    <property type="project" value="GO_Central"/>
</dbReference>
<dbReference type="GO" id="GO:0015732">
    <property type="term" value="P:prostaglandin transport"/>
    <property type="evidence" value="ECO:0000250"/>
    <property type="project" value="UniProtKB"/>
</dbReference>
<dbReference type="GO" id="GO:0015847">
    <property type="term" value="P:putrescine transport"/>
    <property type="evidence" value="ECO:0000250"/>
    <property type="project" value="UniProtKB"/>
</dbReference>
<dbReference type="GO" id="GO:0006837">
    <property type="term" value="P:serotonin transport"/>
    <property type="evidence" value="ECO:0000250"/>
    <property type="project" value="UniProtKB"/>
</dbReference>
<dbReference type="GO" id="GO:0015848">
    <property type="term" value="P:spermidine transport"/>
    <property type="evidence" value="ECO:0000250"/>
    <property type="project" value="UniProtKB"/>
</dbReference>
<dbReference type="GO" id="GO:0071934">
    <property type="term" value="P:thiamine transmembrane transport"/>
    <property type="evidence" value="ECO:0000250"/>
    <property type="project" value="UniProtKB"/>
</dbReference>
<dbReference type="GO" id="GO:0015888">
    <property type="term" value="P:thiamine transport"/>
    <property type="evidence" value="ECO:0000250"/>
    <property type="project" value="UniProtKB"/>
</dbReference>
<dbReference type="GO" id="GO:0042908">
    <property type="term" value="P:xenobiotic transport"/>
    <property type="evidence" value="ECO:0000250"/>
    <property type="project" value="UniProtKB"/>
</dbReference>
<dbReference type="FunFam" id="1.20.1250.20:FF:000148">
    <property type="entry name" value="Solute carrier family 22 member 2"/>
    <property type="match status" value="1"/>
</dbReference>
<dbReference type="Gene3D" id="1.20.1250.20">
    <property type="entry name" value="MFS general substrate transporter like domains"/>
    <property type="match status" value="1"/>
</dbReference>
<dbReference type="InterPro" id="IPR020846">
    <property type="entry name" value="MFS_dom"/>
</dbReference>
<dbReference type="InterPro" id="IPR005828">
    <property type="entry name" value="MFS_sugar_transport-like"/>
</dbReference>
<dbReference type="InterPro" id="IPR036259">
    <property type="entry name" value="MFS_trans_sf"/>
</dbReference>
<dbReference type="InterPro" id="IPR004749">
    <property type="entry name" value="Orgcat_transp/SVOP"/>
</dbReference>
<dbReference type="NCBIfam" id="TIGR00898">
    <property type="entry name" value="2A0119"/>
    <property type="match status" value="1"/>
</dbReference>
<dbReference type="PANTHER" id="PTHR24064">
    <property type="entry name" value="SOLUTE CARRIER FAMILY 22 MEMBER"/>
    <property type="match status" value="1"/>
</dbReference>
<dbReference type="Pfam" id="PF00083">
    <property type="entry name" value="Sugar_tr"/>
    <property type="match status" value="1"/>
</dbReference>
<dbReference type="SUPFAM" id="SSF103473">
    <property type="entry name" value="MFS general substrate transporter"/>
    <property type="match status" value="1"/>
</dbReference>
<dbReference type="PROSITE" id="PS50850">
    <property type="entry name" value="MFS"/>
    <property type="match status" value="1"/>
</dbReference>
<feature type="chain" id="PRO_0000333877" description="Solute carrier family 22 member 1">
    <location>
        <begin position="1"/>
        <end position="554"/>
    </location>
</feature>
<feature type="topological domain" description="Cytoplasmic" evidence="5">
    <location>
        <begin position="1"/>
        <end position="24"/>
    </location>
</feature>
<feature type="transmembrane region" description="Helical" evidence="5">
    <location>
        <begin position="25"/>
        <end position="45"/>
    </location>
</feature>
<feature type="topological domain" description="Extracellular" evidence="5">
    <location>
        <begin position="46"/>
        <end position="234"/>
    </location>
</feature>
<feature type="transmembrane region" description="Helical" evidence="5">
    <location>
        <begin position="235"/>
        <end position="255"/>
    </location>
</feature>
<feature type="topological domain" description="Cytoplasmic" evidence="5">
    <location>
        <begin position="256"/>
        <end position="261"/>
    </location>
</feature>
<feature type="transmembrane region" description="Helical" evidence="5">
    <location>
        <begin position="262"/>
        <end position="282"/>
    </location>
</feature>
<feature type="topological domain" description="Extracellular" evidence="5">
    <location>
        <begin position="283"/>
        <end position="347"/>
    </location>
</feature>
<feature type="transmembrane region" description="Helical" evidence="5">
    <location>
        <begin position="348"/>
        <end position="368"/>
    </location>
</feature>
<feature type="topological domain" description="Cytoplasmic" evidence="5">
    <location>
        <begin position="369"/>
        <end position="376"/>
    </location>
</feature>
<feature type="transmembrane region" description="Helical" evidence="5">
    <location>
        <begin position="377"/>
        <end position="397"/>
    </location>
</feature>
<feature type="topological domain" description="Extracellular" evidence="5">
    <location>
        <begin position="398"/>
        <end position="402"/>
    </location>
</feature>
<feature type="transmembrane region" description="Helical" evidence="5">
    <location>
        <begin position="403"/>
        <end position="423"/>
    </location>
</feature>
<feature type="topological domain" description="Cytoplasmic" evidence="5">
    <location>
        <begin position="424"/>
        <end position="431"/>
    </location>
</feature>
<feature type="transmembrane region" description="Helical" evidence="5">
    <location>
        <begin position="432"/>
        <end position="452"/>
    </location>
</feature>
<feature type="topological domain" description="Extracellular" evidence="5">
    <location>
        <begin position="453"/>
        <end position="464"/>
    </location>
</feature>
<feature type="transmembrane region" description="Helical" evidence="5">
    <location>
        <begin position="465"/>
        <end position="485"/>
    </location>
</feature>
<feature type="topological domain" description="Cytoplasmic" evidence="5">
    <location>
        <begin position="486"/>
        <end position="492"/>
    </location>
</feature>
<feature type="transmembrane region" description="Helical" evidence="5">
    <location>
        <begin position="493"/>
        <end position="513"/>
    </location>
</feature>
<feature type="topological domain" description="Extracellular" evidence="5">
    <location>
        <begin position="514"/>
        <end position="554"/>
    </location>
</feature>
<feature type="short sequence motif" description="Proline-rich sequence" evidence="3">
    <location>
        <begin position="282"/>
        <end position="286"/>
    </location>
</feature>
<feature type="site" description="Involved in affinity and selectivity of cations as well as in transport activity" evidence="4">
    <location>
        <position position="450"/>
    </location>
</feature>
<feature type="site" description="Important for interaction with positively charged substrates" evidence="4">
    <location>
        <position position="474"/>
    </location>
</feature>
<feature type="modified residue" description="Phosphoserine" evidence="2">
    <location>
        <position position="333"/>
    </location>
</feature>
<feature type="glycosylation site" description="N-linked (GlcNAc...) asparagine" evidence="5">
    <location>
        <position position="71"/>
    </location>
</feature>
<evidence type="ECO:0000250" key="1"/>
<evidence type="ECO:0000250" key="2">
    <source>
        <dbReference type="UniProtKB" id="O08966"/>
    </source>
</evidence>
<evidence type="ECO:0000250" key="3">
    <source>
        <dbReference type="UniProtKB" id="O15245"/>
    </source>
</evidence>
<evidence type="ECO:0000250" key="4">
    <source>
        <dbReference type="UniProtKB" id="Q63089"/>
    </source>
</evidence>
<evidence type="ECO:0000255" key="5"/>
<evidence type="ECO:0000305" key="6"/>
<organism>
    <name type="scientific">Sus scrofa</name>
    <name type="common">Pig</name>
    <dbReference type="NCBI Taxonomy" id="9823"/>
    <lineage>
        <taxon>Eukaryota</taxon>
        <taxon>Metazoa</taxon>
        <taxon>Chordata</taxon>
        <taxon>Craniata</taxon>
        <taxon>Vertebrata</taxon>
        <taxon>Euteleostomi</taxon>
        <taxon>Mammalia</taxon>
        <taxon>Eutheria</taxon>
        <taxon>Laurasiatheria</taxon>
        <taxon>Artiodactyla</taxon>
        <taxon>Suina</taxon>
        <taxon>Suidae</taxon>
        <taxon>Sus</taxon>
    </lineage>
</organism>
<comment type="function">
    <text evidence="2 3 4">Electrogenic voltage-dependent transporter that mediates the transport of a variety of organic cations such as endogenous bioactive amines, cationic drugs and xenobiotics (By similarity). Functions as a pH- and Na(+)-independent, bidirectional transporter (By similarity). Cation cellular uptake or release is driven by the electrochemical potential (i.e. membrane potential and concentration gradient) and substrate selectivity (By similarity). Hydrophobicity is a major requirement for recognition in polyvalent substrates and inhibitors (By similarity). Primarily expressed in the basolateral membrane of hepatocytes and proximal tubules and involved in the uptake and disposition of cationic compounds from the blood by hepatic and renal clearance (By similarity). Most likely functions as an uptake carrier in enterocytes contributing to the intestinal elimination of organic cations from the systemic circulation. Transports endogenous monoamines such as N-1-methylnicotinamide (NMN), guanidine, neurotransmitters dopamine, serotonin, noradrenaline, adrenaline and histamine, and quaternary ammonium compound such as choline. Also transports natural polyamines such as spermidine, agmatine and putrescine at low affinity, but relatively high turnover. Involved in the hepatic and intestinal uptake of the vitamin B1/thiamine, hence regulating hepatic lipid and energy metabolism. Contributes to the influx and efflux of fatty acid carriers carnitines and acylcarnitines across the basolateral membrane of hepatocytes, from the liver to the systemic circulation and inversely and may be involved in regulating the systemic availability of hepatic acylcarnitines (By similarity). Also capable of transporting non-amine endogenous compounds such as prostaglandin E2 (PGE2) and prostaglandin F2-alpha (PGF2-alpha) (By similarity). May contribute to the transport of cationic compounds in testes across the blood-testis-barrier (By similarity). Also mediates the uptake of xenobiotics tributylmethylammonium (TBuMA), quinidine, N-methyl-quinine (NMQ), N-methyl-quinidine (NMQD) N-(4,4-azo-n-pentyl)-quinuclidine (APQ), azidoprocainamide methoiodide (AMP), N-(4,4-azo-n-pentyl)-21-deoxyajmalinium (APDA) and 4-(4-(dimethylamino)styryl)-N-methylpyridinium (ASP) (By similarity).</text>
</comment>
<comment type="catalytic activity">
    <reaction evidence="4">
        <text>1-methylnicotinamide(out) = 1-methylnicotinamide(in)</text>
        <dbReference type="Rhea" id="RHEA:73859"/>
        <dbReference type="ChEBI" id="CHEBI:16797"/>
    </reaction>
</comment>
<comment type="catalytic activity">
    <reaction evidence="2">
        <text>dopamine(out) = dopamine(in)</text>
        <dbReference type="Rhea" id="RHEA:73863"/>
        <dbReference type="ChEBI" id="CHEBI:59905"/>
    </reaction>
</comment>
<comment type="catalytic activity">
    <reaction evidence="2">
        <text>serotonin(out) = serotonin(in)</text>
        <dbReference type="Rhea" id="RHEA:73867"/>
        <dbReference type="ChEBI" id="CHEBI:350546"/>
    </reaction>
</comment>
<comment type="catalytic activity">
    <reaction evidence="2">
        <text>(R)-adrenaline(out) = (R)-adrenaline(in)</text>
        <dbReference type="Rhea" id="RHEA:73875"/>
        <dbReference type="ChEBI" id="CHEBI:71406"/>
    </reaction>
</comment>
<comment type="catalytic activity">
    <reaction evidence="2">
        <text>(R)-noradrenaline(out) = (R)-noradrenaline(in)</text>
        <dbReference type="Rhea" id="RHEA:73871"/>
        <dbReference type="ChEBI" id="CHEBI:72587"/>
    </reaction>
</comment>
<comment type="catalytic activity">
    <reaction evidence="2">
        <text>histamine(out) = histamine(in)</text>
        <dbReference type="Rhea" id="RHEA:73879"/>
        <dbReference type="ChEBI" id="CHEBI:58432"/>
    </reaction>
</comment>
<comment type="catalytic activity">
    <reaction evidence="4">
        <text>guanidine(out) = guanidine(in)</text>
        <dbReference type="Rhea" id="RHEA:73883"/>
        <dbReference type="ChEBI" id="CHEBI:30087"/>
    </reaction>
</comment>
<comment type="catalytic activity">
    <reaction evidence="2">
        <text>choline(out) = choline(in)</text>
        <dbReference type="Rhea" id="RHEA:32751"/>
        <dbReference type="ChEBI" id="CHEBI:15354"/>
    </reaction>
</comment>
<comment type="catalytic activity">
    <reaction evidence="3">
        <text>acetylcholine(in) = acetylcholine(out)</text>
        <dbReference type="Rhea" id="RHEA:74663"/>
        <dbReference type="ChEBI" id="CHEBI:15355"/>
    </reaction>
</comment>
<comment type="catalytic activity">
    <reaction evidence="2">
        <text>thiamine(in) = thiamine(out)</text>
        <dbReference type="Rhea" id="RHEA:34919"/>
        <dbReference type="ChEBI" id="CHEBI:18385"/>
    </reaction>
</comment>
<comment type="catalytic activity">
    <reaction evidence="2">
        <text>spermidine(in) = spermidine(out)</text>
        <dbReference type="Rhea" id="RHEA:35039"/>
        <dbReference type="ChEBI" id="CHEBI:57834"/>
    </reaction>
</comment>
<comment type="catalytic activity">
    <reaction evidence="3">
        <text>agmatine(out) = agmatine(in)</text>
        <dbReference type="Rhea" id="RHEA:72131"/>
        <dbReference type="ChEBI" id="CHEBI:58145"/>
    </reaction>
</comment>
<comment type="catalytic activity">
    <reaction evidence="3">
        <text>putrescine(out) = putrescine(in)</text>
        <dbReference type="Rhea" id="RHEA:72135"/>
        <dbReference type="ChEBI" id="CHEBI:326268"/>
    </reaction>
</comment>
<comment type="catalytic activity">
    <reaction evidence="2">
        <text>(R)-carnitine(in) = (R)-carnitine(out)</text>
        <dbReference type="Rhea" id="RHEA:34959"/>
        <dbReference type="ChEBI" id="CHEBI:16347"/>
    </reaction>
</comment>
<comment type="catalytic activity">
    <reaction evidence="2">
        <text>O-isobutanoyl-(R)-carnitine(in) = O-isobutanoyl-(R)-carnitine(out)</text>
        <dbReference type="Rhea" id="RHEA:74315"/>
        <dbReference type="ChEBI" id="CHEBI:84838"/>
    </reaction>
</comment>
<comment type="catalytic activity">
    <reaction evidence="2">
        <text>O-acetyl-(R)-carnitine(in) = O-acetyl-(R)-carnitine(out)</text>
        <dbReference type="Rhea" id="RHEA:74319"/>
        <dbReference type="ChEBI" id="CHEBI:57589"/>
    </reaction>
</comment>
<comment type="catalytic activity">
    <reaction evidence="2">
        <text>O-3-hydroxybutanoyl-(R)-carnitine(in) = O-3-hydroxybutanoyl-(R)-carnitine(out)</text>
        <dbReference type="Rhea" id="RHEA:74323"/>
        <dbReference type="ChEBI" id="CHEBI:84842"/>
    </reaction>
</comment>
<comment type="catalytic activity">
    <reaction evidence="2">
        <text>O-propanoyl-(R)-carnitine(in) = O-propanoyl-(R)-carnitine(out)</text>
        <dbReference type="Rhea" id="RHEA:74327"/>
        <dbReference type="ChEBI" id="CHEBI:53210"/>
    </reaction>
</comment>
<comment type="catalytic activity">
    <reaction evidence="2">
        <text>O-butanoyl-(R)-carnitine(in) = O-butanoyl-(R)-carnitine(out)</text>
        <dbReference type="Rhea" id="RHEA:74331"/>
        <dbReference type="ChEBI" id="CHEBI:21949"/>
    </reaction>
</comment>
<comment type="catalytic activity">
    <reaction evidence="2">
        <text>O-2-methylbutanoyl-(R)-carnitine(in) = O-2-methylbutanoyl-(R)-carnitine(out)</text>
        <dbReference type="Rhea" id="RHEA:74335"/>
        <dbReference type="ChEBI" id="CHEBI:84840"/>
    </reaction>
</comment>
<comment type="catalytic activity">
    <reaction evidence="2">
        <text>O-3-methylbutanoyl-(R)-carnitine(in) = O-3-methylbutanoyl-(R)-carnitine(out)</text>
        <dbReference type="Rhea" id="RHEA:74339"/>
        <dbReference type="ChEBI" id="CHEBI:70819"/>
    </reaction>
</comment>
<comment type="catalytic activity">
    <reaction evidence="2">
        <text>O-hexanoyl-(R)-carnitine(in) = O-hexanoyl-(R)-carnitine(out)</text>
        <dbReference type="Rhea" id="RHEA:74343"/>
        <dbReference type="ChEBI" id="CHEBI:84834"/>
    </reaction>
</comment>
<comment type="catalytic activity">
    <reaction evidence="3">
        <text>L-histidyl-L-proline diketopiperazine(in) = L-histidyl-L-proline diketopiperazine(out)</text>
        <dbReference type="Rhea" id="RHEA:74787"/>
        <dbReference type="ChEBI" id="CHEBI:90039"/>
    </reaction>
</comment>
<comment type="catalytic activity">
    <reaction evidence="3">
        <text>(R)-salsolinol(in) = (R)-salsolinol(out)</text>
        <dbReference type="Rhea" id="RHEA:74791"/>
        <dbReference type="ChEBI" id="CHEBI:194082"/>
    </reaction>
</comment>
<comment type="catalytic activity">
    <reaction evidence="3">
        <text>prostaglandin F2alpha(out) = prostaglandin F2alpha(in)</text>
        <dbReference type="Rhea" id="RHEA:50988"/>
        <dbReference type="ChEBI" id="CHEBI:57404"/>
    </reaction>
</comment>
<comment type="catalytic activity">
    <reaction evidence="3">
        <text>prostaglandin E2(out) = prostaglandin E2(in)</text>
        <dbReference type="Rhea" id="RHEA:50984"/>
        <dbReference type="ChEBI" id="CHEBI:606564"/>
    </reaction>
</comment>
<comment type="activity regulation">
    <text evidence="3 4">Phosphorylation of the transporter leads to changes in its substrate affinity, resulting in a regulation of the transport activity. In contrast with rat ortholog, ASP uptake is inhibited by protein kinase A (PKA) and C (PKC) activation. ASP uptake is also endogenously activated by calmodulin, the calmodulin-dependent kinase II and LCK tyrosine kinase (By similarity). Inhibited by cGMP, most likely through a cGMP-binding protein that interacts with OCT1 (By similarity).</text>
</comment>
<comment type="subcellular location">
    <subcellularLocation>
        <location evidence="3">Basolateral cell membrane</location>
        <topology evidence="6">Multi-pass membrane protein</topology>
    </subcellularLocation>
    <subcellularLocation>
        <location evidence="3">Apical cell membrane</location>
        <topology evidence="6">Multi-pass membrane protein</topology>
    </subcellularLocation>
    <subcellularLocation>
        <location evidence="3">Lateral cell membrane</location>
        <topology evidence="6">Multi-pass membrane protein</topology>
    </subcellularLocation>
    <subcellularLocation>
        <location evidence="3">Basal cell membrane</location>
        <topology evidence="6">Multi-pass membrane protein</topology>
    </subcellularLocation>
    <subcellularLocation>
        <location evidence="3">Cell membrane</location>
        <topology evidence="6">Multi-pass membrane protein</topology>
    </subcellularLocation>
    <text evidence="3 4">Localized to the sinusoidal/basolateral membrane of hepatocytes. Mainly localized to the basolateral membrane of renal proximal tubular cells (By similarity). However, also identified at the apical side of proximal tubular cells. Mainly expressed at the lateral membrane of enterocytes. Also observed at the apical side of enterocytes. Localized to the basal membrane of Sertoli cells (By similarity).</text>
</comment>
<comment type="domain">
    <text evidence="4">A large substrate binding region with partially overlapping binding domains for structurally different substrates is formed by several transmembrane helix domains (TMH) including TMH 2, 4, 10 and 11, and it is alternatingly exposed to the extracellular or intracellular side during substrate transport.</text>
</comment>
<comment type="domain">
    <text evidence="3">Contains one proline-rich sequence (Pro-Glu-Ser-Pro-Arg) that is required for transport activity.</text>
</comment>
<comment type="PTM">
    <text evidence="1">Phosphorylated.</text>
</comment>
<comment type="miscellaneous">
    <text evidence="3">Involved in the uptake of clinically used drugs including diabete treatment medicine metformin, neurotoxins 1-methyl-4-phenylpyridinium (MPP(+)) and iobenguane and platinum-based drug cisplatin (By similarity). Also involved in metformin efflux transport (By similarity). Metformin competitively inhibits OCT1-mediated thiamine uptake, leading to a decrease in hepatic steatosis (By similarity). Plays a role in the anticancer activity of cisplatin and may contribute to antitumor specificity (By similarity).</text>
</comment>
<comment type="similarity">
    <text evidence="6">Belongs to the major facilitator (TC 2.A.1) superfamily. Organic cation transporter (TC 2.A.1.19) family.</text>
</comment>
<comment type="caution">
    <text evidence="2 3 4">Cellular localization of OCT1 in the intestine and the kidney remains to be finally defined. While most authors have deduced a localization at the basolateral side of enterocytes consistent with a physiological role in organic anions uptake from the blood flow and intestinal excretion (By similarity), other studies demonstrated an apical localization (By similarity), supporting a function in intestinal absorption of organic anions and drugs (By similarity). Similarly, contradictory findings have shown a localization to the basolateral side (By similarity) or to the apical side (By similarity) of proximal tubules (By similarity). Affinity and capacity of the transporter for endogenous substrates vary among orthologs (By similarity).</text>
</comment>